<proteinExistence type="inferred from homology"/>
<protein>
    <recommendedName>
        <fullName evidence="1">Transcriptional repressor NrdR</fullName>
    </recommendedName>
</protein>
<dbReference type="EMBL" id="CP000548">
    <property type="protein sequence ID" value="ABO04353.1"/>
    <property type="molecule type" value="Genomic_DNA"/>
</dbReference>
<dbReference type="RefSeq" id="WP_004185666.1">
    <property type="nucleotide sequence ID" value="NZ_CP007802.1"/>
</dbReference>
<dbReference type="SMR" id="A3MMJ2"/>
<dbReference type="GeneID" id="93061344"/>
<dbReference type="KEGG" id="bmaz:BM44_1276"/>
<dbReference type="KEGG" id="bmn:BMA10247_1941"/>
<dbReference type="PATRIC" id="fig|320389.8.peg.1420"/>
<dbReference type="GO" id="GO:0005524">
    <property type="term" value="F:ATP binding"/>
    <property type="evidence" value="ECO:0007669"/>
    <property type="project" value="UniProtKB-KW"/>
</dbReference>
<dbReference type="GO" id="GO:0003677">
    <property type="term" value="F:DNA binding"/>
    <property type="evidence" value="ECO:0007669"/>
    <property type="project" value="UniProtKB-KW"/>
</dbReference>
<dbReference type="GO" id="GO:0008270">
    <property type="term" value="F:zinc ion binding"/>
    <property type="evidence" value="ECO:0007669"/>
    <property type="project" value="UniProtKB-UniRule"/>
</dbReference>
<dbReference type="GO" id="GO:0045892">
    <property type="term" value="P:negative regulation of DNA-templated transcription"/>
    <property type="evidence" value="ECO:0007669"/>
    <property type="project" value="UniProtKB-UniRule"/>
</dbReference>
<dbReference type="HAMAP" id="MF_00440">
    <property type="entry name" value="NrdR"/>
    <property type="match status" value="1"/>
</dbReference>
<dbReference type="InterPro" id="IPR005144">
    <property type="entry name" value="ATP-cone_dom"/>
</dbReference>
<dbReference type="InterPro" id="IPR055173">
    <property type="entry name" value="NrdR-like_N"/>
</dbReference>
<dbReference type="InterPro" id="IPR003796">
    <property type="entry name" value="RNR_NrdR-like"/>
</dbReference>
<dbReference type="NCBIfam" id="TIGR00244">
    <property type="entry name" value="transcriptional regulator NrdR"/>
    <property type="match status" value="1"/>
</dbReference>
<dbReference type="PANTHER" id="PTHR30455">
    <property type="entry name" value="TRANSCRIPTIONAL REPRESSOR NRDR"/>
    <property type="match status" value="1"/>
</dbReference>
<dbReference type="PANTHER" id="PTHR30455:SF2">
    <property type="entry name" value="TRANSCRIPTIONAL REPRESSOR NRDR"/>
    <property type="match status" value="1"/>
</dbReference>
<dbReference type="Pfam" id="PF03477">
    <property type="entry name" value="ATP-cone"/>
    <property type="match status" value="1"/>
</dbReference>
<dbReference type="Pfam" id="PF22811">
    <property type="entry name" value="Zn_ribbon_NrdR"/>
    <property type="match status" value="1"/>
</dbReference>
<dbReference type="PROSITE" id="PS51161">
    <property type="entry name" value="ATP_CONE"/>
    <property type="match status" value="1"/>
</dbReference>
<gene>
    <name evidence="1" type="primary">nrdR</name>
    <name type="ordered locus">BMA10247_1941</name>
</gene>
<comment type="function">
    <text evidence="1">Negatively regulates transcription of bacterial ribonucleotide reductase nrd genes and operons by binding to NrdR-boxes.</text>
</comment>
<comment type="cofactor">
    <cofactor evidence="1">
        <name>Zn(2+)</name>
        <dbReference type="ChEBI" id="CHEBI:29105"/>
    </cofactor>
    <text evidence="1">Binds 1 zinc ion.</text>
</comment>
<comment type="similarity">
    <text evidence="1">Belongs to the NrdR family.</text>
</comment>
<sequence length="159" mass="18427">MRCPFCRHDDTQVVDSRVSEDGAAIRRRRRCSACDKRFTTYERVELALPAVVKKDGSRTEFDRRKIVASMQLALRKRPVAADAIDAAVARIEYQLLASGEREVRSEKLGELVMNELRQLDTIAYVRFASVYRRFEDVSEFEDVIEEFRRAAPAKTPRKR</sequence>
<evidence type="ECO:0000255" key="1">
    <source>
        <dbReference type="HAMAP-Rule" id="MF_00440"/>
    </source>
</evidence>
<name>NRDR_BURM7</name>
<feature type="chain" id="PRO_1000080722" description="Transcriptional repressor NrdR">
    <location>
        <begin position="1"/>
        <end position="159"/>
    </location>
</feature>
<feature type="domain" description="ATP-cone" evidence="1">
    <location>
        <begin position="49"/>
        <end position="139"/>
    </location>
</feature>
<feature type="zinc finger region" evidence="1">
    <location>
        <begin position="3"/>
        <end position="34"/>
    </location>
</feature>
<organism>
    <name type="scientific">Burkholderia mallei (strain NCTC 10247)</name>
    <dbReference type="NCBI Taxonomy" id="320389"/>
    <lineage>
        <taxon>Bacteria</taxon>
        <taxon>Pseudomonadati</taxon>
        <taxon>Pseudomonadota</taxon>
        <taxon>Betaproteobacteria</taxon>
        <taxon>Burkholderiales</taxon>
        <taxon>Burkholderiaceae</taxon>
        <taxon>Burkholderia</taxon>
        <taxon>pseudomallei group</taxon>
    </lineage>
</organism>
<keyword id="KW-0067">ATP-binding</keyword>
<keyword id="KW-0238">DNA-binding</keyword>
<keyword id="KW-0479">Metal-binding</keyword>
<keyword id="KW-0547">Nucleotide-binding</keyword>
<keyword id="KW-0678">Repressor</keyword>
<keyword id="KW-0804">Transcription</keyword>
<keyword id="KW-0805">Transcription regulation</keyword>
<keyword id="KW-0862">Zinc</keyword>
<keyword id="KW-0863">Zinc-finger</keyword>
<reference key="1">
    <citation type="journal article" date="2010" name="Genome Biol. Evol.">
        <title>Continuing evolution of Burkholderia mallei through genome reduction and large-scale rearrangements.</title>
        <authorList>
            <person name="Losada L."/>
            <person name="Ronning C.M."/>
            <person name="DeShazer D."/>
            <person name="Woods D."/>
            <person name="Fedorova N."/>
            <person name="Kim H.S."/>
            <person name="Shabalina S.A."/>
            <person name="Pearson T.R."/>
            <person name="Brinkac L."/>
            <person name="Tan P."/>
            <person name="Nandi T."/>
            <person name="Crabtree J."/>
            <person name="Badger J."/>
            <person name="Beckstrom-Sternberg S."/>
            <person name="Saqib M."/>
            <person name="Schutzer S.E."/>
            <person name="Keim P."/>
            <person name="Nierman W.C."/>
        </authorList>
    </citation>
    <scope>NUCLEOTIDE SEQUENCE [LARGE SCALE GENOMIC DNA]</scope>
    <source>
        <strain>NCTC 10247</strain>
    </source>
</reference>
<accession>A3MMJ2</accession>